<feature type="chain" id="PRO_0000398841" description="Prelamin-A/C">
    <location>
        <begin position="1"/>
        <end position="662"/>
    </location>
</feature>
<feature type="chain" id="PRO_0000063813" description="Lamin-A/C">
    <location>
        <begin position="1"/>
        <end position="647"/>
    </location>
</feature>
<feature type="propeptide" id="PRO_0000398842" description="Removed in Lamin-A/C form" evidence="1">
    <location>
        <begin position="648"/>
        <end position="662"/>
    </location>
</feature>
<feature type="propeptide" id="PRO_0000403445" description="Removed in Prelamin-A/C form and in Lamin-A/C form" evidence="1">
    <location>
        <begin position="663"/>
        <end position="665"/>
    </location>
</feature>
<feature type="domain" description="IF rod" evidence="5">
    <location>
        <begin position="31"/>
        <end position="387"/>
    </location>
</feature>
<feature type="domain" description="LTD" evidence="4">
    <location>
        <begin position="428"/>
        <end position="545"/>
    </location>
</feature>
<feature type="region of interest" description="Interaction with MLIP" evidence="1">
    <location>
        <begin position="1"/>
        <end position="130"/>
    </location>
</feature>
<feature type="region of interest" description="Head">
    <location>
        <begin position="1"/>
        <end position="33"/>
    </location>
</feature>
<feature type="region of interest" description="Disordered" evidence="6">
    <location>
        <begin position="1"/>
        <end position="27"/>
    </location>
</feature>
<feature type="region of interest" description="Coil 1A">
    <location>
        <begin position="34"/>
        <end position="70"/>
    </location>
</feature>
<feature type="region of interest" description="Linker 1">
    <location>
        <begin position="71"/>
        <end position="80"/>
    </location>
</feature>
<feature type="region of interest" description="Coil 1B">
    <location>
        <begin position="81"/>
        <end position="218"/>
    </location>
</feature>
<feature type="region of interest" description="Linker 2">
    <location>
        <begin position="219"/>
        <end position="242"/>
    </location>
</feature>
<feature type="region of interest" description="Coil 2">
    <location>
        <begin position="243"/>
        <end position="383"/>
    </location>
</feature>
<feature type="region of interest" description="Tail">
    <location>
        <begin position="384"/>
        <end position="665"/>
    </location>
</feature>
<feature type="region of interest" description="Disordered" evidence="6">
    <location>
        <begin position="384"/>
        <end position="442"/>
    </location>
</feature>
<feature type="region of interest" description="Disordered" evidence="6">
    <location>
        <begin position="552"/>
        <end position="577"/>
    </location>
</feature>
<feature type="short sequence motif" description="Nuclear localization signal" evidence="3">
    <location>
        <begin position="417"/>
        <end position="422"/>
    </location>
</feature>
<feature type="compositionally biased region" description="Low complexity" evidence="6">
    <location>
        <begin position="395"/>
        <end position="409"/>
    </location>
</feature>
<feature type="compositionally biased region" description="Acidic residues" evidence="6">
    <location>
        <begin position="552"/>
        <end position="561"/>
    </location>
</feature>
<feature type="site" description="Heptad change of phase">
    <location>
        <position position="266"/>
    </location>
</feature>
<feature type="site" description="Stutter" evidence="7">
    <location>
        <position position="325"/>
    </location>
</feature>
<feature type="site" description="Heptad change of phase">
    <location>
        <position position="330"/>
    </location>
</feature>
<feature type="site" description="Cleavage; by endoprotease" evidence="1">
    <location>
        <begin position="647"/>
        <end position="648"/>
    </location>
</feature>
<feature type="modified residue" description="N-acetylmethionine" evidence="1">
    <location>
        <position position="1"/>
    </location>
</feature>
<feature type="modified residue" description="Phosphothreonine" evidence="1">
    <location>
        <position position="3"/>
    </location>
</feature>
<feature type="modified residue" description="Phosphoserine" evidence="1">
    <location>
        <position position="5"/>
    </location>
</feature>
<feature type="modified residue" description="Phosphothreonine" evidence="1">
    <location>
        <position position="10"/>
    </location>
</feature>
<feature type="modified residue" description="Phosphoserine" evidence="1">
    <location>
        <position position="12"/>
    </location>
</feature>
<feature type="modified residue" description="Phosphoserine" evidence="1">
    <location>
        <position position="18"/>
    </location>
</feature>
<feature type="modified residue" description="Phosphothreonine" evidence="1">
    <location>
        <position position="19"/>
    </location>
</feature>
<feature type="modified residue" description="Phosphoserine" evidence="1">
    <location>
        <position position="22"/>
    </location>
</feature>
<feature type="modified residue" description="N6-acetyllysine; alternate" evidence="2">
    <location>
        <position position="32"/>
    </location>
</feature>
<feature type="modified residue" description="N6-succinyllysine; alternate" evidence="2">
    <location>
        <position position="32"/>
    </location>
</feature>
<feature type="modified residue" description="Phosphoserine" evidence="1">
    <location>
        <position position="51"/>
    </location>
</feature>
<feature type="modified residue" description="Phosphoserine" evidence="1">
    <location>
        <position position="66"/>
    </location>
</feature>
<feature type="modified residue" description="Phosphoserine" evidence="1">
    <location>
        <position position="71"/>
    </location>
</feature>
<feature type="modified residue" description="N6-acetyllysine" evidence="2">
    <location>
        <position position="78"/>
    </location>
</feature>
<feature type="modified residue" description="N6-acetyllysine" evidence="2">
    <location>
        <position position="97"/>
    </location>
</feature>
<feature type="modified residue" description="Phosphoserine" evidence="1">
    <location>
        <position position="107"/>
    </location>
</feature>
<feature type="modified residue" description="N6-acetyllysine" evidence="1">
    <location>
        <position position="108"/>
    </location>
</feature>
<feature type="modified residue" description="N6-acetyllysine" evidence="2">
    <location>
        <position position="114"/>
    </location>
</feature>
<feature type="modified residue" description="N6-acetyllysine" evidence="2">
    <location>
        <position position="123"/>
    </location>
</feature>
<feature type="modified residue" description="N6-acetyllysine" evidence="2">
    <location>
        <position position="135"/>
    </location>
</feature>
<feature type="modified residue" description="N6-acetyllysine" evidence="2">
    <location>
        <position position="144"/>
    </location>
</feature>
<feature type="modified residue" description="N6-acetyllysine" evidence="2">
    <location>
        <position position="155"/>
    </location>
</feature>
<feature type="modified residue" description="N6-acetyllysine; alternate" evidence="2">
    <location>
        <position position="171"/>
    </location>
</feature>
<feature type="modified residue" description="N6-succinyllysine; alternate" evidence="2">
    <location>
        <position position="171"/>
    </location>
</feature>
<feature type="modified residue" description="N6-acetyllysine" evidence="2">
    <location>
        <position position="180"/>
    </location>
</feature>
<feature type="modified residue" description="N6-acetyllysine" evidence="2">
    <location>
        <position position="201"/>
    </location>
</feature>
<feature type="modified residue" description="N6-acetyllysine" evidence="2">
    <location>
        <position position="208"/>
    </location>
</feature>
<feature type="modified residue" description="Phosphoserine" evidence="1">
    <location>
        <position position="212"/>
    </location>
</feature>
<feature type="modified residue" description="N6-acetyllysine" evidence="2">
    <location>
        <position position="233"/>
    </location>
</feature>
<feature type="modified residue" description="N6-acetyllysine" evidence="2">
    <location>
        <position position="260"/>
    </location>
</feature>
<feature type="modified residue" description="N6-acetyllysine" evidence="2">
    <location>
        <position position="265"/>
    </location>
</feature>
<feature type="modified residue" description="N6-acetyllysine" evidence="1">
    <location>
        <position position="270"/>
    </location>
</feature>
<feature type="modified residue" description="Phosphoserine" evidence="1">
    <location>
        <position position="277"/>
    </location>
</feature>
<feature type="modified residue" description="Phosphoserine" evidence="1">
    <location>
        <position position="282"/>
    </location>
</feature>
<feature type="modified residue" description="Phosphoserine" evidence="1">
    <location>
        <position position="301"/>
    </location>
</feature>
<feature type="modified residue" description="Phosphoserine" evidence="1">
    <location>
        <position position="307"/>
    </location>
</feature>
<feature type="modified residue" description="N6-acetyllysine" evidence="1">
    <location>
        <position position="311"/>
    </location>
</feature>
<feature type="modified residue" description="N6-acetyllysine" evidence="2">
    <location>
        <position position="316"/>
    </location>
</feature>
<feature type="modified residue" description="N6-acetyllysine" evidence="2">
    <location>
        <position position="341"/>
    </location>
</feature>
<feature type="modified residue" description="Phosphoserine" evidence="8">
    <location>
        <position position="390"/>
    </location>
</feature>
<feature type="modified residue" description="Phosphoserine" evidence="2">
    <location>
        <position position="392"/>
    </location>
</feature>
<feature type="modified residue" description="Phosphoserine" evidence="1">
    <location>
        <position position="395"/>
    </location>
</feature>
<feature type="modified residue" description="Phosphoserine" evidence="1">
    <location>
        <position position="398"/>
    </location>
</feature>
<feature type="modified residue" description="Phosphoserine" evidence="1">
    <location>
        <position position="403"/>
    </location>
</feature>
<feature type="modified residue" description="Phosphoserine" evidence="1">
    <location>
        <position position="404"/>
    </location>
</feature>
<feature type="modified residue" description="Phosphoserine" evidence="1">
    <location>
        <position position="406"/>
    </location>
</feature>
<feature type="modified residue" description="Phosphoserine" evidence="2">
    <location>
        <position position="407"/>
    </location>
</feature>
<feature type="modified residue" description="Phosphoserine" evidence="2">
    <location>
        <position position="409"/>
    </location>
</feature>
<feature type="modified residue" description="Phosphoserine" evidence="1">
    <location>
        <position position="414"/>
    </location>
</feature>
<feature type="modified residue" description="Phosphothreonine" evidence="1">
    <location>
        <position position="416"/>
    </location>
</feature>
<feature type="modified residue" description="N6-acetyllysine" evidence="2">
    <location>
        <position position="417"/>
    </location>
</feature>
<feature type="modified residue" description="Phosphoserine" evidence="1">
    <location>
        <position position="423"/>
    </location>
</feature>
<feature type="modified residue" description="Phosphoserine" evidence="1">
    <location>
        <position position="426"/>
    </location>
</feature>
<feature type="modified residue" description="Phosphoserine" evidence="1">
    <location>
        <position position="429"/>
    </location>
</feature>
<feature type="modified residue" description="Phosphoserine" evidence="1">
    <location>
        <position position="431"/>
    </location>
</feature>
<feature type="modified residue" description="N6-acetyllysine" evidence="1">
    <location>
        <position position="450"/>
    </location>
</feature>
<feature type="modified residue" description="N6-acetyllysine" evidence="2">
    <location>
        <position position="457"/>
    </location>
</feature>
<feature type="modified residue" description="Phosphoserine" evidence="1">
    <location>
        <position position="458"/>
    </location>
</feature>
<feature type="modified residue" description="Phosphoserine" evidence="1">
    <location>
        <position position="463"/>
    </location>
</feature>
<feature type="modified residue" description="N6-acetyllysine" evidence="2">
    <location>
        <position position="486"/>
    </location>
</feature>
<feature type="modified residue" description="Phosphothreonine" evidence="8">
    <location>
        <position position="496"/>
    </location>
</feature>
<feature type="modified residue" description="Phosphoserine" evidence="8">
    <location>
        <position position="500"/>
    </location>
</feature>
<feature type="modified residue" description="Phosphothreonine" evidence="1">
    <location>
        <position position="505"/>
    </location>
</feature>
<feature type="modified residue" description="Phosphothreonine" evidence="8">
    <location>
        <position position="510"/>
    </location>
</feature>
<feature type="modified residue" description="Phosphoserine" evidence="2">
    <location>
        <position position="546"/>
    </location>
</feature>
<feature type="modified residue" description="Phosphothreonine" evidence="2">
    <location>
        <position position="548"/>
    </location>
</feature>
<feature type="modified residue" description="Phosphoserine" evidence="2">
    <location>
        <position position="570"/>
    </location>
</feature>
<feature type="modified residue" description="Phosphoserine" evidence="2">
    <location>
        <position position="573"/>
    </location>
</feature>
<feature type="modified residue" description="Phosphoserine" evidence="1">
    <location>
        <position position="613"/>
    </location>
</feature>
<feature type="modified residue" description="Phosphoserine" evidence="1">
    <location>
        <position position="614"/>
    </location>
</feature>
<feature type="modified residue" description="Phosphoserine" evidence="2">
    <location>
        <position position="617"/>
    </location>
</feature>
<feature type="modified residue" description="Phosphoserine" evidence="1">
    <location>
        <position position="620"/>
    </location>
</feature>
<feature type="modified residue" description="Phosphoserine" evidence="1">
    <location>
        <position position="629"/>
    </location>
</feature>
<feature type="modified residue" description="Phosphoserine" evidence="1">
    <location>
        <position position="633"/>
    </location>
</feature>
<feature type="modified residue" description="Phosphoserine" evidence="1">
    <location>
        <position position="637"/>
    </location>
</feature>
<feature type="modified residue" description="Phosphoserine" evidence="1">
    <location>
        <position position="653"/>
    </location>
</feature>
<feature type="modified residue" description="Cysteine methyl ester" evidence="1">
    <location>
        <position position="662"/>
    </location>
</feature>
<feature type="lipid moiety-binding region" description="S-farnesyl cysteine" evidence="1">
    <location>
        <position position="662"/>
    </location>
</feature>
<feature type="glycosylation site" description="O-linked (GlcNAc) serine" evidence="1">
    <location>
        <position position="626"/>
    </location>
</feature>
<feature type="glycosylation site" description="O-linked (GlcNAc) serine" evidence="1">
    <location>
        <position position="629"/>
    </location>
</feature>
<feature type="cross-link" description="Glycyl lysine isopeptide (Lys-Gly) (interchain with G-Cter in SUMO2); alternate" evidence="1">
    <location>
        <position position="32"/>
    </location>
</feature>
<feature type="cross-link" description="Glycyl lysine isopeptide (Lys-Gly) (interchain with G-Cter in SUMO2)" evidence="1">
    <location>
        <position position="97"/>
    </location>
</feature>
<feature type="cross-link" description="Glycyl lysine isopeptide (Lys-Gly) (interchain with G-Cter in SUMO2); alternate" evidence="1">
    <location>
        <position position="171"/>
    </location>
</feature>
<feature type="cross-link" description="Glycyl lysine isopeptide (Lys-Gly) (interchain with G-Cter in SUMO); alternate" evidence="1">
    <location>
        <position position="201"/>
    </location>
</feature>
<feature type="cross-link" description="Glycyl lysine isopeptide (Lys-Gly) (interchain with G-Cter in SUMO2); alternate" evidence="1">
    <location>
        <position position="201"/>
    </location>
</feature>
<feature type="cross-link" description="Glycyl lysine isopeptide (Lys-Gly) (interchain with G-Cter in SUMO2)" evidence="1">
    <location>
        <position position="208"/>
    </location>
</feature>
<feature type="cross-link" description="Glycyl lysine isopeptide (Lys-Gly) (interchain with G-Cter in SUMO2)" evidence="1">
    <location>
        <position position="219"/>
    </location>
</feature>
<feature type="cross-link" description="Glycyl lysine isopeptide (Lys-Gly) (interchain with G-Cter in SUMO2)" evidence="1">
    <location>
        <position position="233"/>
    </location>
</feature>
<feature type="cross-link" description="Glycyl lysine isopeptide (Lys-Gly) (interchain with G-Cter in SUMO2); alternate" evidence="1">
    <location>
        <position position="260"/>
    </location>
</feature>
<feature type="cross-link" description="Glycyl lysine isopeptide (Lys-Gly) (interchain with G-Cter in SUMO2); alternate" evidence="1">
    <location>
        <position position="270"/>
    </location>
</feature>
<feature type="cross-link" description="Glycyl lysine isopeptide (Lys-Gly) (interchain with G-Cter in SUMO2); alternate" evidence="1">
    <location>
        <position position="311"/>
    </location>
</feature>
<feature type="cross-link" description="Glycyl lysine isopeptide (Lys-Gly) (interchain with G-Cter in SUMO2)" evidence="1">
    <location>
        <position position="366"/>
    </location>
</feature>
<feature type="cross-link" description="Glycyl lysine isopeptide (Lys-Gly) (interchain with G-Cter in SUMO2)" evidence="1">
    <location>
        <position position="378"/>
    </location>
</feature>
<feature type="cross-link" description="Glycyl lysine isopeptide (Lys-Gly) (interchain with G-Cter in SUMO2)" evidence="1">
    <location>
        <position position="417"/>
    </location>
</feature>
<feature type="cross-link" description="Glycyl lysine isopeptide (Lys-Gly) (interchain with G-Cter in SUMO2)" evidence="1">
    <location>
        <position position="420"/>
    </location>
</feature>
<feature type="cross-link" description="Glycyl lysine isopeptide (Lys-Gly) (interchain with G-Cter in SUMO2); alternate" evidence="1">
    <location>
        <position position="450"/>
    </location>
</feature>
<feature type="cross-link" description="Glycyl lysine isopeptide (Lys-Gly) (interchain with G-Cter in SUMO2)" evidence="1">
    <location>
        <position position="470"/>
    </location>
</feature>
<feature type="cross-link" description="Glycyl lysine isopeptide (Lys-Gly) (interchain with G-Cter in SUMO2)" evidence="1">
    <location>
        <position position="486"/>
    </location>
</feature>
<feature type="cross-link" description="Glycyl lysine isopeptide (Lys-Gly) (interchain with G-Cter in SUMO1); alternate" evidence="1">
    <location>
        <position position="599"/>
    </location>
</feature>
<feature type="cross-link" description="Glycyl lysine isopeptide (Lys-Gly) (interchain with G-Cter in SUMO2); alternate" evidence="1">
    <location>
        <position position="599"/>
    </location>
</feature>
<feature type="sequence conflict" description="In Ref. 1; CAA47342." evidence="7" ref="1">
    <original>K</original>
    <variation>R</variation>
    <location>
        <position position="470"/>
    </location>
</feature>
<feature type="sequence conflict" description="In Ref. 1; CAA47342." evidence="7" ref="1">
    <original>T</original>
    <variation>S</variation>
    <location>
        <position position="524"/>
    </location>
</feature>
<feature type="sequence conflict" description="In Ref. 1; CAA47342." evidence="7" ref="1">
    <original>R</original>
    <variation>P</variation>
    <location>
        <position position="584"/>
    </location>
</feature>
<feature type="sequence conflict" description="In Ref. 1; CAA47342." evidence="7" ref="1">
    <original>A</original>
    <variation>P</variation>
    <location>
        <position position="606"/>
    </location>
</feature>
<organism>
    <name type="scientific">Rattus norvegicus</name>
    <name type="common">Rat</name>
    <dbReference type="NCBI Taxonomy" id="10116"/>
    <lineage>
        <taxon>Eukaryota</taxon>
        <taxon>Metazoa</taxon>
        <taxon>Chordata</taxon>
        <taxon>Craniata</taxon>
        <taxon>Vertebrata</taxon>
        <taxon>Euteleostomi</taxon>
        <taxon>Mammalia</taxon>
        <taxon>Eutheria</taxon>
        <taxon>Euarchontoglires</taxon>
        <taxon>Glires</taxon>
        <taxon>Rodentia</taxon>
        <taxon>Myomorpha</taxon>
        <taxon>Muroidea</taxon>
        <taxon>Muridae</taxon>
        <taxon>Murinae</taxon>
        <taxon>Rattus</taxon>
    </lineage>
</organism>
<gene>
    <name type="primary">Lmna</name>
    <name type="synonym">Lmn1</name>
</gene>
<keyword id="KW-0007">Acetylation</keyword>
<keyword id="KW-0025">Alternative splicing</keyword>
<keyword id="KW-0175">Coiled coil</keyword>
<keyword id="KW-0903">Direct protein sequencing</keyword>
<keyword id="KW-0325">Glycoprotein</keyword>
<keyword id="KW-0403">Intermediate filament</keyword>
<keyword id="KW-1017">Isopeptide bond</keyword>
<keyword id="KW-0449">Lipoprotein</keyword>
<keyword id="KW-0488">Methylation</keyword>
<keyword id="KW-0539">Nucleus</keyword>
<keyword id="KW-0597">Phosphoprotein</keyword>
<keyword id="KW-0636">Prenylation</keyword>
<keyword id="KW-1185">Reference proteome</keyword>
<keyword id="KW-0832">Ubl conjugation</keyword>
<comment type="function">
    <molecule>Lamin-A/C</molecule>
    <text evidence="1">Lamins are intermediate filament proteins that assemble into a filamentous meshwork, and which constitute the major components of the nuclear lamina, a fibrous layer on the nucleoplasmic side of the inner nuclear membrane. Lamins provide a framework for the nuclear envelope, bridging the nuclear envelope and chromatin, thereby playing an important role in nuclear assembly, chromatin organization, nuclear membrane and telomere dynamics. Lamin A and C also regulate matrix stiffness by conferring nuclear mechanical properties. The structural integrity of the lamina is strictly controlled by the cell cycle, as seen by the disintegration and formation of the nuclear envelope in prophase and telophase, respectively. Lamin A and C are present in equal amounts in the lamina of mammals. Also invoved in DNA repair: recruited by DNA repair proteins XRCC4 and IFFO1 to the DNA double-strand breaks (DSBs) to prevent chromosome translocation by immobilizing broken DNA ends. Required for normal development of peripheral nervous system and skeletal muscle and for muscle satellite cell proliferation. Required for osteoblastogenesis and bone formation. Also prevents fat infiltration of muscle and bone marrow, helping to maintain the volume and strength of skeletal muscle and bone. Required for cardiac homeostasis.</text>
</comment>
<comment type="function">
    <molecule>Prelamin-A/C</molecule>
    <text evidence="1">Prelamin-A/C can accelerate smooth muscle cell senescence. It acts to disrupt mitosis and induce DNA damage in vascular smooth muscle cells (VSMCs), leading to mitotic failure, genomic instability, and premature senescence.</text>
</comment>
<comment type="subunit">
    <text evidence="1 2">Homodimer of lamin A and lamin C. Lamin dimers then assemble into dimeric head-to-tail polymers. Ultimately, two head-to-tail polymers assemble laterally into a protofilament with a uniformly shaped rod of 3.5 nm in diameter. Interacts with lamin-associated polypeptides IA, IB and TMPO-alpha, RB1 and with emerin (By similarity). Interacts with SREBF1, SREBF2, SUN2 and TMEM43 (By similarity). Interacts with TMEM201 (By similarity). Proteolytically processed isoform A interacts with NARF. Interacts with SUN1. Interacts with MLIP. Interacts with DMPK; may regulate nuclear envelope stability. Interacts with SUV39H1; the interaction increases stability of SUV39H1. Interacts with SYNE2. Interacts with ITSN1 isoform 2. Interacts with IFFO1; enables the formation of an interior nucleoskeleton that is recruited to DNA double-strand breaks (By similarity).</text>
</comment>
<comment type="subunit">
    <molecule>Prelamin-A/C</molecule>
    <text evidence="1">Interacts with EMD.</text>
</comment>
<comment type="subunit">
    <molecule>Isoform Lamin C</molecule>
    <text evidence="1">Interacts (via C-terminus) with LEMD2 (via N-terminus) (in vitro).</text>
</comment>
<comment type="subcellular location">
    <subcellularLocation>
        <location evidence="1">Nucleus lamina</location>
    </subcellularLocation>
    <subcellularLocation>
        <location evidence="1">Nucleus envelope</location>
    </subcellularLocation>
    <subcellularLocation>
        <location evidence="1">Nucleus</location>
        <location evidence="1">Nucleoplasm</location>
    </subcellularLocation>
    <subcellularLocation>
        <location evidence="1">Nucleus matrix</location>
    </subcellularLocation>
    <text evidence="1">Farnesylation of prelamin-A/C facilitates nuclear envelope targeting and subsequent cleavage by ZMPSTE24/FACE1 to remove the farnesyl group produces mature lamin-A/C, which can then be inserted into the nuclear lamina. EMD is required for proper localization of non-farnesylated prelamin-A/C. Also localizes to the micronuclear envelope in response to response to genome instability.</text>
</comment>
<comment type="alternative products">
    <event type="alternative splicing"/>
    <isoform>
        <id>P48679-1</id>
        <name>Lamin A</name>
        <sequence type="displayed"/>
    </isoform>
    <isoform>
        <id>P48679-2</id>
        <name>Lamin C</name>
        <sequence type="not described"/>
    </isoform>
    <text>Isoform A and isoform C are present in equal amounts in the lamina of mammals.</text>
</comment>
<comment type="PTM">
    <text evidence="1">Proteolytic cleavage of the C-terminal of 18 residues of prelamin-A/C results in the production of lamin-A/C. The prelamin-A/C maturation pathway includes farnesylation of CAAX motif by protein farnesyltransferase (FNTA and FNTB), removal of the last three amino acids (-AAX) by RCE1/FACE2 and/or ZMPSTE24, methylation of the C-terminal cysteine by ICMT and endoproteolytic removal of the last 15 C-terminal amino acids by ZMPSTE24. Proteolytic cleavage requires prior farnesylation and methylation, and absence of these blocks cleavage.</text>
</comment>
<comment type="PTM">
    <text evidence="1">Farnesylation of prelamin-A/C facilitates nuclear envelope targeting.</text>
</comment>
<comment type="PTM">
    <text evidence="1">Phosphorylation plays a key role in lamin organization, subcellular localization and nuclear envelope disintegration. Phosphorylation by CDK1 at Ser-22 and Ser-392 at the onset of mitosis drives lamin disassembly and nuclear envelope breakdown. Phosphorylation at Ser-22 and Ser-392 during interphase promotes localization to the nucleoplasm and regulates lamina assembly. Phosphorylation at Ser-22, Ser-392 and Ser-629 during interphase causes redistribution between the nucleus and the cytoplasm. Phosphorylation at Ser-22 by CDK1 regulates matrix stiffness. Phosphorylation status of Ser-22 determines its localization between double-strand break (DSB) sites and the nuclear matrix. Phosphorylated by ATR at Ser-282 in response to DNA damage, leading to lamin disassembly and nuclear envelope rupture. Phosphorylation also regulates stability in micronuclei arising from genome instability: phosphorylation at Ser-395 by ATR in response to genome instability and double-stranded DNA breaks primes LMNA for subsequent phosphorylation at Ser-392 by CDK1 and micronuclei envelope rupture. The rupture of micronuclear envelope triggers the cGAS-STING pathway thereby activating the type I interferon response and innate immunity.</text>
</comment>
<comment type="PTM">
    <text evidence="2">Acetylation by KAT8 is required for nuclear architecture.</text>
</comment>
<comment type="PTM">
    <text evidence="1">Sumoylation is necessary for the localization to the nuclear envelope.</text>
</comment>
<comment type="similarity">
    <text evidence="5">Belongs to the intermediate filament family.</text>
</comment>
<comment type="sequence caution" evidence="7">
    <conflict type="frameshift">
        <sequence resource="EMBL-CDS" id="CAA47342"/>
    </conflict>
</comment>
<sequence>METPSQRRPTRSGAQASSTPLSPTRITRLQEKEDLQELNDRLAVYIDRVRSLETENAGLRLRITESEEVVSREVSGIKAAYEAELGDARKTLDSVAKERARLQLELSKVREEFKELKARNTKKEGDLLAAQARLKDLEALLNSKEAALSTALSEKRTLEGELHDLRGQVAKLEAALGEAKKQLQDEMLRRVDAENRLQTLKEELDFQKNIYSEELRETKRRHETRLVEIDNGKQREFESRLADALQELRAQHEDQVEQYKKELEKTYSAKLDNARQSAERNSNLVGAAHEELQQSRIRIDSLSAQLSQLQKQLAAKEAKLRDLEDSLARERDTSRRLLAEKEREMAEMRARMQQQLDEYQELLDIKLALDMEIHAYRKLLEGEEERLRLSPSPTSQRSRGRASSHSSQSQGGGSVTKKRKLESSESRSSFSQHARTSGRVAVEEVDEEGKFVRLRNKSNEDQSMGNWQIKRQNGDDPLMTYRFPPKFTLKAGQVVTIWASGAGATHSPPTDLVWKAQNTWGCGTSLRTALINATGEEVAMRKLVRSLTMVEDNDDEEEDGDELLHHHRGSHCSSSGDPAEYNLRSRTVLCGTCGQPADKAASGSGAQVGGSISSGSSASSVTVTRSFRSVGGSGGGSFGDNLVTRSYLLGNSSPRTQSSQNCSIM</sequence>
<protein>
    <recommendedName>
        <fullName>Prelamin-A/C</fullName>
    </recommendedName>
    <component>
        <recommendedName>
            <fullName>Lamin-A/C</fullName>
        </recommendedName>
    </component>
</protein>
<name>LMNA_RAT</name>
<reference key="1">
    <citation type="journal article" date="1992" name="FEBS Lett.">
        <title>Lamin A gene expression is specifically suppressed in v-src-transformed cells.</title>
        <authorList>
            <person name="Ozaki T."/>
            <person name="Sakiyama S."/>
        </authorList>
    </citation>
    <scope>NUCLEOTIDE SEQUENCE [MRNA]</scope>
</reference>
<reference key="2">
    <citation type="submission" date="1993-11" db="EMBL/GenBank/DDBJ databases">
        <authorList>
            <person name="Jonnalagadda V.S."/>
            <person name="Parnaik V.K."/>
        </authorList>
    </citation>
    <scope>NUCLEOTIDE SEQUENCE [MRNA] OF 26-663</scope>
    <source>
        <strain>Sprague-Dawley</strain>
        <tissue>Liver</tissue>
    </source>
</reference>
<reference key="3">
    <citation type="journal article" date="2005" name="FEBS J.">
        <title>Proteome analysis of a rat liver nuclear insoluble protein fraction and localization of a novel protein, ISP36, to compartments in the interchromatin space.</title>
        <authorList>
            <person name="Segawa M."/>
            <person name="Niino K."/>
            <person name="Mineki R."/>
            <person name="Kaga N."/>
            <person name="Murayama K."/>
            <person name="Sugimoto K."/>
            <person name="Watanabe Y."/>
            <person name="Furukawa K."/>
            <person name="Horigome T."/>
        </authorList>
    </citation>
    <scope>PROTEIN SEQUENCE OF 124-132; 209-215; 320-328 AND 629-643</scope>
    <source>
        <tissue>Liver</tissue>
    </source>
</reference>
<reference key="4">
    <citation type="journal article" date="2006" name="Proc. Natl. Acad. Sci. U.S.A.">
        <title>Quantitative phosphoproteomics of vasopressin-sensitive renal cells: regulation of aquaporin-2 phosphorylation at two sites.</title>
        <authorList>
            <person name="Hoffert J.D."/>
            <person name="Pisitkun T."/>
            <person name="Wang G."/>
            <person name="Shen R.-F."/>
            <person name="Knepper M.A."/>
        </authorList>
    </citation>
    <scope>PHOSPHORYLATION [LARGE SCALE ANALYSIS] AT SER-390; THR-496; SER-500 AND THR-510</scope>
    <scope>IDENTIFICATION BY MASS SPECTROMETRY [LARGE SCALE ANALYSIS]</scope>
</reference>
<dbReference type="EMBL" id="X66870">
    <property type="protein sequence ID" value="CAA47342.1"/>
    <property type="status" value="ALT_FRAME"/>
    <property type="molecule type" value="mRNA"/>
</dbReference>
<dbReference type="EMBL" id="X76297">
    <property type="protein sequence ID" value="CAA53945.1"/>
    <property type="molecule type" value="mRNA"/>
</dbReference>
<dbReference type="PIR" id="S27267">
    <property type="entry name" value="S27267"/>
</dbReference>
<dbReference type="SMR" id="P48679"/>
<dbReference type="FunCoup" id="P48679">
    <property type="interactions" value="1334"/>
</dbReference>
<dbReference type="IntAct" id="P48679">
    <property type="interactions" value="3"/>
</dbReference>
<dbReference type="MINT" id="P48679"/>
<dbReference type="STRING" id="10116.ENSRNOP00000026705"/>
<dbReference type="CarbonylDB" id="P48679"/>
<dbReference type="GlyGen" id="P48679">
    <property type="glycosylation" value="3 sites, 1 O-linked glycan (1 site)"/>
</dbReference>
<dbReference type="iPTMnet" id="P48679"/>
<dbReference type="PhosphoSitePlus" id="P48679"/>
<dbReference type="SwissPalm" id="P48679"/>
<dbReference type="jPOST" id="P48679"/>
<dbReference type="PaxDb" id="10116-ENSRNOP00000026705"/>
<dbReference type="UCSC" id="RGD:620456">
    <molecule id="P48679-1"/>
    <property type="organism name" value="rat"/>
</dbReference>
<dbReference type="AGR" id="RGD:620456"/>
<dbReference type="RGD" id="620456">
    <property type="gene designation" value="Lmna"/>
</dbReference>
<dbReference type="eggNOG" id="KOG0977">
    <property type="taxonomic scope" value="Eukaryota"/>
</dbReference>
<dbReference type="InParanoid" id="P48679"/>
<dbReference type="PhylomeDB" id="P48679"/>
<dbReference type="Reactome" id="R-RNO-2980766">
    <property type="pathway name" value="Nuclear Envelope Breakdown"/>
</dbReference>
<dbReference type="Reactome" id="R-RNO-2995383">
    <property type="pathway name" value="Initiation of Nuclear Envelope (NE) Reformation"/>
</dbReference>
<dbReference type="Reactome" id="R-RNO-352238">
    <property type="pathway name" value="Breakdown of the nuclear lamina"/>
</dbReference>
<dbReference type="Reactome" id="R-RNO-4419969">
    <property type="pathway name" value="Depolymerization of the Nuclear Lamina"/>
</dbReference>
<dbReference type="PRO" id="PR:P48679"/>
<dbReference type="Proteomes" id="UP000002494">
    <property type="component" value="Unplaced"/>
</dbReference>
<dbReference type="GO" id="GO:0005638">
    <property type="term" value="C:lamin filament"/>
    <property type="evidence" value="ECO:0000266"/>
    <property type="project" value="RGD"/>
</dbReference>
<dbReference type="GO" id="GO:0005635">
    <property type="term" value="C:nuclear envelope"/>
    <property type="evidence" value="ECO:0000314"/>
    <property type="project" value="RGD"/>
</dbReference>
<dbReference type="GO" id="GO:0005652">
    <property type="term" value="C:nuclear lamina"/>
    <property type="evidence" value="ECO:0000250"/>
    <property type="project" value="UniProtKB"/>
</dbReference>
<dbReference type="GO" id="GO:0016363">
    <property type="term" value="C:nuclear matrix"/>
    <property type="evidence" value="ECO:0000314"/>
    <property type="project" value="RGD"/>
</dbReference>
<dbReference type="GO" id="GO:0031965">
    <property type="term" value="C:nuclear membrane"/>
    <property type="evidence" value="ECO:0000266"/>
    <property type="project" value="RGD"/>
</dbReference>
<dbReference type="GO" id="GO:0005654">
    <property type="term" value="C:nucleoplasm"/>
    <property type="evidence" value="ECO:0000250"/>
    <property type="project" value="UniProtKB"/>
</dbReference>
<dbReference type="GO" id="GO:0005634">
    <property type="term" value="C:nucleus"/>
    <property type="evidence" value="ECO:0000266"/>
    <property type="project" value="RGD"/>
</dbReference>
<dbReference type="GO" id="GO:0048471">
    <property type="term" value="C:perinuclear region of cytoplasm"/>
    <property type="evidence" value="ECO:0000266"/>
    <property type="project" value="RGD"/>
</dbReference>
<dbReference type="GO" id="GO:0035861">
    <property type="term" value="C:site of double-strand break"/>
    <property type="evidence" value="ECO:0000250"/>
    <property type="project" value="UniProtKB"/>
</dbReference>
<dbReference type="GO" id="GO:0008157">
    <property type="term" value="F:protein phosphatase 1 binding"/>
    <property type="evidence" value="ECO:0000353"/>
    <property type="project" value="RGD"/>
</dbReference>
<dbReference type="GO" id="GO:0005200">
    <property type="term" value="F:structural constituent of cytoskeleton"/>
    <property type="evidence" value="ECO:0000318"/>
    <property type="project" value="GO_Central"/>
</dbReference>
<dbReference type="GO" id="GO:0160123">
    <property type="term" value="F:structural constituent of nuclear lamina"/>
    <property type="evidence" value="ECO:0000250"/>
    <property type="project" value="UniProtKB"/>
</dbReference>
<dbReference type="GO" id="GO:0071456">
    <property type="term" value="P:cellular response to hypoxia"/>
    <property type="evidence" value="ECO:0000266"/>
    <property type="project" value="RGD"/>
</dbReference>
<dbReference type="GO" id="GO:0090398">
    <property type="term" value="P:cellular senescence"/>
    <property type="evidence" value="ECO:0000270"/>
    <property type="project" value="RGD"/>
</dbReference>
<dbReference type="GO" id="GO:1990683">
    <property type="term" value="P:DNA double-strand break attachment to nuclear envelope"/>
    <property type="evidence" value="ECO:0000250"/>
    <property type="project" value="UniProtKB"/>
</dbReference>
<dbReference type="GO" id="GO:0030951">
    <property type="term" value="P:establishment or maintenance of microtubule cytoskeleton polarity"/>
    <property type="evidence" value="ECO:0000266"/>
    <property type="project" value="RGD"/>
</dbReference>
<dbReference type="GO" id="GO:0031507">
    <property type="term" value="P:heterochromatin formation"/>
    <property type="evidence" value="ECO:0000318"/>
    <property type="project" value="GO_Central"/>
</dbReference>
<dbReference type="GO" id="GO:0007517">
    <property type="term" value="P:muscle organ development"/>
    <property type="evidence" value="ECO:0000266"/>
    <property type="project" value="RGD"/>
</dbReference>
<dbReference type="GO" id="GO:1904178">
    <property type="term" value="P:negative regulation of adipose tissue development"/>
    <property type="evidence" value="ECO:0000315"/>
    <property type="project" value="RGD"/>
</dbReference>
<dbReference type="GO" id="GO:1903243">
    <property type="term" value="P:negative regulation of cardiac muscle hypertrophy in response to stress"/>
    <property type="evidence" value="ECO:0000250"/>
    <property type="project" value="UniProtKB"/>
</dbReference>
<dbReference type="GO" id="GO:0008285">
    <property type="term" value="P:negative regulation of cell population proliferation"/>
    <property type="evidence" value="ECO:0000266"/>
    <property type="project" value="RGD"/>
</dbReference>
<dbReference type="GO" id="GO:2001237">
    <property type="term" value="P:negative regulation of extrinsic apoptotic signaling pathway"/>
    <property type="evidence" value="ECO:0000266"/>
    <property type="project" value="RGD"/>
</dbReference>
<dbReference type="GO" id="GO:0072201">
    <property type="term" value="P:negative regulation of mesenchymal cell proliferation"/>
    <property type="evidence" value="ECO:0000266"/>
    <property type="project" value="RGD"/>
</dbReference>
<dbReference type="GO" id="GO:0090201">
    <property type="term" value="P:negative regulation of release of cytochrome c from mitochondria"/>
    <property type="evidence" value="ECO:0000266"/>
    <property type="project" value="RGD"/>
</dbReference>
<dbReference type="GO" id="GO:0006998">
    <property type="term" value="P:nuclear envelope organization"/>
    <property type="evidence" value="ECO:0000250"/>
    <property type="project" value="UniProtKB"/>
</dbReference>
<dbReference type="GO" id="GO:0007097">
    <property type="term" value="P:nuclear migration"/>
    <property type="evidence" value="ECO:0000318"/>
    <property type="project" value="GO_Central"/>
</dbReference>
<dbReference type="GO" id="GO:0051664">
    <property type="term" value="P:nuclear pore localization"/>
    <property type="evidence" value="ECO:0000318"/>
    <property type="project" value="GO_Central"/>
</dbReference>
<dbReference type="GO" id="GO:0006997">
    <property type="term" value="P:nucleus organization"/>
    <property type="evidence" value="ECO:0000266"/>
    <property type="project" value="RGD"/>
</dbReference>
<dbReference type="GO" id="GO:0010628">
    <property type="term" value="P:positive regulation of gene expression"/>
    <property type="evidence" value="ECO:0000266"/>
    <property type="project" value="RGD"/>
</dbReference>
<dbReference type="GO" id="GO:0045669">
    <property type="term" value="P:positive regulation of osteoblast differentiation"/>
    <property type="evidence" value="ECO:0000315"/>
    <property type="project" value="RGD"/>
</dbReference>
<dbReference type="GO" id="GO:0006606">
    <property type="term" value="P:protein import into nucleus"/>
    <property type="evidence" value="ECO:0000266"/>
    <property type="project" value="RGD"/>
</dbReference>
<dbReference type="GO" id="GO:0090435">
    <property type="term" value="P:protein localization to nuclear envelope"/>
    <property type="evidence" value="ECO:0000318"/>
    <property type="project" value="GO_Central"/>
</dbReference>
<dbReference type="GO" id="GO:0034504">
    <property type="term" value="P:protein localization to nucleus"/>
    <property type="evidence" value="ECO:0000250"/>
    <property type="project" value="UniProtKB"/>
</dbReference>
<dbReference type="GO" id="GO:0030334">
    <property type="term" value="P:regulation of cell migration"/>
    <property type="evidence" value="ECO:0000266"/>
    <property type="project" value="RGD"/>
</dbReference>
<dbReference type="GO" id="GO:1900180">
    <property type="term" value="P:regulation of protein localization to nucleus"/>
    <property type="evidence" value="ECO:0000266"/>
    <property type="project" value="RGD"/>
</dbReference>
<dbReference type="GO" id="GO:0031647">
    <property type="term" value="P:regulation of protein stability"/>
    <property type="evidence" value="ECO:0000266"/>
    <property type="project" value="RGD"/>
</dbReference>
<dbReference type="GO" id="GO:0032204">
    <property type="term" value="P:regulation of telomere maintenance"/>
    <property type="evidence" value="ECO:0000266"/>
    <property type="project" value="RGD"/>
</dbReference>
<dbReference type="GO" id="GO:0009612">
    <property type="term" value="P:response to mechanical stimulus"/>
    <property type="evidence" value="ECO:0000270"/>
    <property type="project" value="RGD"/>
</dbReference>
<dbReference type="GO" id="GO:0007283">
    <property type="term" value="P:spermatogenesis"/>
    <property type="evidence" value="ECO:0000270"/>
    <property type="project" value="RGD"/>
</dbReference>
<dbReference type="GO" id="GO:0055015">
    <property type="term" value="P:ventricular cardiac muscle cell development"/>
    <property type="evidence" value="ECO:0000266"/>
    <property type="project" value="RGD"/>
</dbReference>
<dbReference type="FunFam" id="1.20.5.170:FF:000033">
    <property type="entry name" value="Lamin A/C"/>
    <property type="match status" value="1"/>
</dbReference>
<dbReference type="FunFam" id="1.20.5.500:FF:000002">
    <property type="entry name" value="Lamin A/C"/>
    <property type="match status" value="1"/>
</dbReference>
<dbReference type="FunFam" id="2.60.40.1260:FF:000001">
    <property type="entry name" value="Lamin A/C"/>
    <property type="match status" value="1"/>
</dbReference>
<dbReference type="Gene3D" id="1.20.5.170">
    <property type="match status" value="1"/>
</dbReference>
<dbReference type="Gene3D" id="2.60.40.1260">
    <property type="entry name" value="Lamin Tail domain"/>
    <property type="match status" value="1"/>
</dbReference>
<dbReference type="Gene3D" id="1.20.5.500">
    <property type="entry name" value="Single helix bin"/>
    <property type="match status" value="1"/>
</dbReference>
<dbReference type="Gene3D" id="1.20.5.1160">
    <property type="entry name" value="Vasodilator-stimulated phosphoprotein"/>
    <property type="match status" value="1"/>
</dbReference>
<dbReference type="InterPro" id="IPR018039">
    <property type="entry name" value="IF_conserved"/>
</dbReference>
<dbReference type="InterPro" id="IPR039008">
    <property type="entry name" value="IF_rod_dom"/>
</dbReference>
<dbReference type="InterPro" id="IPR001322">
    <property type="entry name" value="Lamin_tail_dom"/>
</dbReference>
<dbReference type="InterPro" id="IPR036415">
    <property type="entry name" value="Lamin_tail_dom_sf"/>
</dbReference>
<dbReference type="PANTHER" id="PTHR45721">
    <property type="entry name" value="LAMIN DM0-RELATED"/>
    <property type="match status" value="1"/>
</dbReference>
<dbReference type="PANTHER" id="PTHR45721:SF5">
    <property type="entry name" value="PRELAMIN-A_C"/>
    <property type="match status" value="1"/>
</dbReference>
<dbReference type="Pfam" id="PF00038">
    <property type="entry name" value="Filament"/>
    <property type="match status" value="1"/>
</dbReference>
<dbReference type="Pfam" id="PF00932">
    <property type="entry name" value="LTD"/>
    <property type="match status" value="1"/>
</dbReference>
<dbReference type="SMART" id="SM01391">
    <property type="entry name" value="Filament"/>
    <property type="match status" value="1"/>
</dbReference>
<dbReference type="SUPFAM" id="SSF64593">
    <property type="entry name" value="Intermediate filament protein, coiled coil region"/>
    <property type="match status" value="2"/>
</dbReference>
<dbReference type="SUPFAM" id="SSF74853">
    <property type="entry name" value="Lamin A/C globular tail domain"/>
    <property type="match status" value="1"/>
</dbReference>
<dbReference type="PROSITE" id="PS00226">
    <property type="entry name" value="IF_ROD_1"/>
    <property type="match status" value="1"/>
</dbReference>
<dbReference type="PROSITE" id="PS51842">
    <property type="entry name" value="IF_ROD_2"/>
    <property type="match status" value="1"/>
</dbReference>
<dbReference type="PROSITE" id="PS51841">
    <property type="entry name" value="LTD"/>
    <property type="match status" value="1"/>
</dbReference>
<evidence type="ECO:0000250" key="1">
    <source>
        <dbReference type="UniProtKB" id="P02545"/>
    </source>
</evidence>
<evidence type="ECO:0000250" key="2">
    <source>
        <dbReference type="UniProtKB" id="P48678"/>
    </source>
</evidence>
<evidence type="ECO:0000255" key="3"/>
<evidence type="ECO:0000255" key="4">
    <source>
        <dbReference type="PROSITE-ProRule" id="PRU01187"/>
    </source>
</evidence>
<evidence type="ECO:0000255" key="5">
    <source>
        <dbReference type="PROSITE-ProRule" id="PRU01188"/>
    </source>
</evidence>
<evidence type="ECO:0000256" key="6">
    <source>
        <dbReference type="SAM" id="MobiDB-lite"/>
    </source>
</evidence>
<evidence type="ECO:0000305" key="7"/>
<evidence type="ECO:0007744" key="8">
    <source>
    </source>
</evidence>
<proteinExistence type="evidence at protein level"/>
<accession>P48679</accession>